<reference key="1">
    <citation type="journal article" date="2003" name="J. Bacteriol.">
        <title>Complete genome sequence of the ammonia-oxidizing bacterium and obligate chemolithoautotroph Nitrosomonas europaea.</title>
        <authorList>
            <person name="Chain P."/>
            <person name="Lamerdin J.E."/>
            <person name="Larimer F.W."/>
            <person name="Regala W."/>
            <person name="Lao V."/>
            <person name="Land M.L."/>
            <person name="Hauser L."/>
            <person name="Hooper A.B."/>
            <person name="Klotz M.G."/>
            <person name="Norton J."/>
            <person name="Sayavedra-Soto L.A."/>
            <person name="Arciero D.M."/>
            <person name="Hommes N.G."/>
            <person name="Whittaker M.M."/>
            <person name="Arp D.J."/>
        </authorList>
    </citation>
    <scope>NUCLEOTIDE SEQUENCE [LARGE SCALE GENOMIC DNA]</scope>
    <source>
        <strain>ATCC 19718 / CIP 103999 / KCTC 2705 / NBRC 14298</strain>
    </source>
</reference>
<reference key="2">
    <citation type="journal article" date="2014" name="J. Biosci. Bioeng.">
        <title>New gene responsible for para-aminobenzoate biosynthesis.</title>
        <authorList>
            <person name="Satoh Y."/>
            <person name="Kuratsu M."/>
            <person name="Kobayashi D."/>
            <person name="Dairi T."/>
        </authorList>
    </citation>
    <scope>FUNCTION</scope>
    <scope>EXPRESSION IN E.COLI MUTANT</scope>
    <source>
        <strain>ATCC 19718 / CIP 103999 / KCTC 2705 / NBRC 14298</strain>
    </source>
</reference>
<name>CADD_NITEU</name>
<comment type="function">
    <text evidence="1 2">Involved in de novo para-aminobenzoate (PABA) biosynthesis (PubMed:23972426). Acts as a self-sacrificing or 'suicide' enzyme that utilizes its own active site tyrosine residue(s) as the substrate for PABA synthesis. The side chain of the tyrosine residue is released from the protein backbone via cleavage of the C(alpha)-C(beta) bond, leaving a glycine in place of the original tyrosine residue. Reaction requires O(2) and a reduced dimetal cofactor (By similarity).</text>
</comment>
<comment type="cofactor">
    <cofactor evidence="1">
        <name>Fe(2+)</name>
        <dbReference type="ChEBI" id="CHEBI:29033"/>
    </cofactor>
    <cofactor evidence="1">
        <name>Mn(2+)</name>
        <dbReference type="ChEBI" id="CHEBI:29035"/>
    </cofactor>
    <text evidence="1">Binds 2 divalent metal cations per subunit.</text>
</comment>
<comment type="subunit">
    <text evidence="1">Homodimer.</text>
</comment>
<comment type="miscellaneous">
    <text evidence="2">Can complement the PABA-auxotrophic E.coli mutant lacking pabA, pabB and pabC genes.</text>
</comment>
<comment type="similarity">
    <text evidence="3">Belongs to the CADD family.</text>
</comment>
<sequence>MATNTFKQQVDSIIQSRHLLQHPFYIAWTEGKLTREQLRHYAEQYFYNVLAEPTYLSAVHFNTPHFHNVENSGDISIRQEVLKNLIDEEHGEKNHPALWKAFAFALGADDASLTQADALPETENLVATFRDICINEPFYAGLAALHAFESQVPDIAAVKIDGLAKFYGMKDPDSYEFFSVHQTADIFHSQAEWAIIEKFADTPEKQAEVLAATRRACDALWKFLDGIHENYCANLICEEKTAATLH</sequence>
<dbReference type="EC" id="1.3.3.-" evidence="1"/>
<dbReference type="EMBL" id="AL954747">
    <property type="protein sequence ID" value="CAD85345.1"/>
    <property type="molecule type" value="Genomic_DNA"/>
</dbReference>
<dbReference type="RefSeq" id="WP_011112002.1">
    <property type="nucleotide sequence ID" value="NC_004757.1"/>
</dbReference>
<dbReference type="SMR" id="Q82UP8"/>
<dbReference type="STRING" id="228410.NE1434"/>
<dbReference type="GeneID" id="87104608"/>
<dbReference type="KEGG" id="neu:NE1434"/>
<dbReference type="eggNOG" id="COG5424">
    <property type="taxonomic scope" value="Bacteria"/>
</dbReference>
<dbReference type="HOGENOM" id="CLU_088144_0_0_4"/>
<dbReference type="OrthoDB" id="9800756at2"/>
<dbReference type="PhylomeDB" id="Q82UP8"/>
<dbReference type="Proteomes" id="UP000001416">
    <property type="component" value="Chromosome"/>
</dbReference>
<dbReference type="GO" id="GO:0046872">
    <property type="term" value="F:metal ion binding"/>
    <property type="evidence" value="ECO:0007669"/>
    <property type="project" value="UniProtKB-KW"/>
</dbReference>
<dbReference type="GO" id="GO:0016491">
    <property type="term" value="F:oxidoreductase activity"/>
    <property type="evidence" value="ECO:0007669"/>
    <property type="project" value="UniProtKB-KW"/>
</dbReference>
<dbReference type="Gene3D" id="1.20.910.10">
    <property type="entry name" value="Heme oxygenase-like"/>
    <property type="match status" value="1"/>
</dbReference>
<dbReference type="InterPro" id="IPR027572">
    <property type="entry name" value="Fol-rel_CADD"/>
</dbReference>
<dbReference type="InterPro" id="IPR016084">
    <property type="entry name" value="Haem_Oase-like_multi-hlx"/>
</dbReference>
<dbReference type="InterPro" id="IPR039068">
    <property type="entry name" value="PqqC-like"/>
</dbReference>
<dbReference type="NCBIfam" id="TIGR04305">
    <property type="entry name" value="fol_rel_CADD"/>
    <property type="match status" value="1"/>
</dbReference>
<dbReference type="PANTHER" id="PTHR40279:SF3">
    <property type="entry name" value="4-AMINOBENZOATE SYNTHASE"/>
    <property type="match status" value="1"/>
</dbReference>
<dbReference type="PANTHER" id="PTHR40279">
    <property type="entry name" value="PQQC-LIKE PROTEIN"/>
    <property type="match status" value="1"/>
</dbReference>
<dbReference type="Pfam" id="PF14518">
    <property type="entry name" value="Haem_oxygenas_2"/>
    <property type="match status" value="1"/>
</dbReference>
<dbReference type="SMART" id="SM01236">
    <property type="entry name" value="Haem_oxygenase_2"/>
    <property type="match status" value="1"/>
</dbReference>
<dbReference type="SUPFAM" id="SSF48613">
    <property type="entry name" value="Heme oxygenase-like"/>
    <property type="match status" value="1"/>
</dbReference>
<gene>
    <name evidence="4" type="ordered locus">NE1434</name>
</gene>
<evidence type="ECO:0000250" key="1">
    <source>
        <dbReference type="UniProtKB" id="O84616"/>
    </source>
</evidence>
<evidence type="ECO:0000269" key="2">
    <source>
    </source>
</evidence>
<evidence type="ECO:0000305" key="3"/>
<evidence type="ECO:0000312" key="4">
    <source>
        <dbReference type="EMBL" id="CAD85345.1"/>
    </source>
</evidence>
<feature type="chain" id="PRO_0000457766" description="4-aminobenzoate synthase">
    <location>
        <begin position="1"/>
        <end position="246"/>
    </location>
</feature>
<feature type="binding site" evidence="1">
    <location>
        <position position="88"/>
    </location>
    <ligand>
        <name>Fe(2+)</name>
        <dbReference type="ChEBI" id="CHEBI:29033"/>
        <label>1</label>
    </ligand>
</feature>
<feature type="binding site" evidence="1">
    <location>
        <position position="88"/>
    </location>
    <ligand>
        <name>Fe(2+)</name>
        <dbReference type="ChEBI" id="CHEBI:29033"/>
        <label>2</label>
    </ligand>
</feature>
<feature type="binding site" evidence="1">
    <location>
        <position position="95"/>
    </location>
    <ligand>
        <name>Fe(2+)</name>
        <dbReference type="ChEBI" id="CHEBI:29033"/>
        <label>1</label>
    </ligand>
</feature>
<feature type="binding site" evidence="1">
    <location>
        <position position="149"/>
    </location>
    <ligand>
        <name>Fe(2+)</name>
        <dbReference type="ChEBI" id="CHEBI:29033"/>
        <label>2</label>
    </ligand>
</feature>
<feature type="binding site" evidence="1">
    <location>
        <position position="181"/>
    </location>
    <ligand>
        <name>Fe(2+)</name>
        <dbReference type="ChEBI" id="CHEBI:29033"/>
        <label>1</label>
    </ligand>
</feature>
<feature type="binding site" evidence="1">
    <location>
        <position position="185"/>
    </location>
    <ligand>
        <name>Fe(2+)</name>
        <dbReference type="ChEBI" id="CHEBI:29033"/>
        <label>2</label>
    </ligand>
</feature>
<feature type="binding site" evidence="1">
    <location>
        <position position="188"/>
    </location>
    <ligand>
        <name>Fe(2+)</name>
        <dbReference type="ChEBI" id="CHEBI:29033"/>
        <label>2</label>
    </ligand>
</feature>
<feature type="site" description="Side-chain cleavage" evidence="1">
    <location>
        <position position="25"/>
    </location>
</feature>
<protein>
    <recommendedName>
        <fullName evidence="1">4-aminobenzoate synthase</fullName>
        <ecNumber evidence="1">1.3.3.-</ecNumber>
    </recommendedName>
    <alternativeName>
        <fullName evidence="1">para-aminobenzoate synthase</fullName>
        <shortName evidence="1">PABA synthase</shortName>
    </alternativeName>
</protein>
<accession>Q82UP8</accession>
<proteinExistence type="inferred from homology"/>
<organism>
    <name type="scientific">Nitrosomonas europaea (strain ATCC 19718 / CIP 103999 / KCTC 2705 / NBRC 14298)</name>
    <dbReference type="NCBI Taxonomy" id="228410"/>
    <lineage>
        <taxon>Bacteria</taxon>
        <taxon>Pseudomonadati</taxon>
        <taxon>Pseudomonadota</taxon>
        <taxon>Betaproteobacteria</taxon>
        <taxon>Nitrosomonadales</taxon>
        <taxon>Nitrosomonadaceae</taxon>
        <taxon>Nitrosomonas</taxon>
    </lineage>
</organism>
<keyword id="KW-0408">Iron</keyword>
<keyword id="KW-0479">Metal-binding</keyword>
<keyword id="KW-0560">Oxidoreductase</keyword>
<keyword id="KW-1185">Reference proteome</keyword>